<protein>
    <recommendedName>
        <fullName evidence="1">UPF0285 protein Mbar_A0208</fullName>
    </recommendedName>
</protein>
<comment type="similarity">
    <text evidence="1">Belongs to the UPF0285 family.</text>
</comment>
<reference key="1">
    <citation type="journal article" date="2006" name="J. Bacteriol.">
        <title>The Methanosarcina barkeri genome: comparative analysis with Methanosarcina acetivorans and Methanosarcina mazei reveals extensive rearrangement within methanosarcinal genomes.</title>
        <authorList>
            <person name="Maeder D.L."/>
            <person name="Anderson I."/>
            <person name="Brettin T.S."/>
            <person name="Bruce D.C."/>
            <person name="Gilna P."/>
            <person name="Han C.S."/>
            <person name="Lapidus A."/>
            <person name="Metcalf W.W."/>
            <person name="Saunders E."/>
            <person name="Tapia R."/>
            <person name="Sowers K.R."/>
        </authorList>
    </citation>
    <scope>NUCLEOTIDE SEQUENCE [LARGE SCALE GENOMIC DNA]</scope>
    <source>
        <strain>Fusaro / DSM 804</strain>
    </source>
</reference>
<dbReference type="EMBL" id="CP000099">
    <property type="protein sequence ID" value="AAZ69192.1"/>
    <property type="molecule type" value="Genomic_DNA"/>
</dbReference>
<dbReference type="SMR" id="Q46G00"/>
<dbReference type="STRING" id="269797.Mbar_A0208"/>
<dbReference type="PaxDb" id="269797-Mbar_A0208"/>
<dbReference type="KEGG" id="mba:Mbar_A0208"/>
<dbReference type="eggNOG" id="arCOG04885">
    <property type="taxonomic scope" value="Archaea"/>
</dbReference>
<dbReference type="HOGENOM" id="CLU_846254_0_0_2"/>
<dbReference type="OrthoDB" id="235676at2157"/>
<dbReference type="HAMAP" id="MF_01087">
    <property type="entry name" value="UPF0285"/>
    <property type="match status" value="1"/>
</dbReference>
<dbReference type="InterPro" id="IPR043129">
    <property type="entry name" value="ATPase_NBD"/>
</dbReference>
<dbReference type="InterPro" id="IPR016735">
    <property type="entry name" value="Methan_mark_12"/>
</dbReference>
<dbReference type="NCBIfam" id="TIGR03281">
    <property type="entry name" value="methan_mark_12"/>
    <property type="match status" value="1"/>
</dbReference>
<dbReference type="PIRSF" id="PIRSF018783">
    <property type="entry name" value="UCP018783"/>
    <property type="match status" value="1"/>
</dbReference>
<dbReference type="SUPFAM" id="SSF53067">
    <property type="entry name" value="Actin-like ATPase domain"/>
    <property type="match status" value="1"/>
</dbReference>
<organism>
    <name type="scientific">Methanosarcina barkeri (strain Fusaro / DSM 804)</name>
    <dbReference type="NCBI Taxonomy" id="269797"/>
    <lineage>
        <taxon>Archaea</taxon>
        <taxon>Methanobacteriati</taxon>
        <taxon>Methanobacteriota</taxon>
        <taxon>Stenosarchaea group</taxon>
        <taxon>Methanomicrobia</taxon>
        <taxon>Methanosarcinales</taxon>
        <taxon>Methanosarcinaceae</taxon>
        <taxon>Methanosarcina</taxon>
    </lineage>
</organism>
<name>Y208_METBF</name>
<accession>Q46G00</accession>
<sequence length="325" mass="35301">MAFIGIDHGTTAMRFALIEGESTHTFELERAEAAAMSENEILTSLEEHFGIRRETINLIALTYSMGDGFSTIKDVRNLEGRGLKSIEGAGKKTGGGTRVFDAIRHSGVPAIAIPGLHTESKVDPRMKVFSHLTSPEKLGIAYHILCLGYNNFVVSDISSNTVTLAIADRKVIGAIDACIFAPGVHHGPLDLQAIRDVDNGYRTANKAFMEAGALKMTPYKDRDELLLAAEDEESPALLALDTISLFAAMEIASMQLLLKDYETIGEVFLAGSVGEFEYVQKKIRAHLGQECQCLGKWHAAIGCAEIARDVFAGEKEILGVEVNYP</sequence>
<proteinExistence type="inferred from homology"/>
<feature type="chain" id="PRO_1000064869" description="UPF0285 protein Mbar_A0208">
    <location>
        <begin position="1"/>
        <end position="325"/>
    </location>
</feature>
<evidence type="ECO:0000255" key="1">
    <source>
        <dbReference type="HAMAP-Rule" id="MF_01087"/>
    </source>
</evidence>
<gene>
    <name type="ordered locus">Mbar_A0208</name>
</gene>